<proteinExistence type="inferred from homology"/>
<sequence length="322" mass="36804">MVQLALKEEKELTKEEIKELQKEVRRLAKEKNAVILAHYYQRPEVQDIADFVGDSLELARKASQTDADIIVFCGVRFMCETAKIVNPEKKVLHPNPESGCPMADMITAKQVRELREKHPDAEFVAYINTTADVKAEVDICVTSANAPKIIKKLEAKKIVFLPDQALGNWVAKQVPEKEFIIWKGFCPPHFEFTYKELEKLKEMYPDAKVAVHPECHPRVIELADFVGSTSQILKYATSVDAKRVIVVTEVGLKYTLEKINPNKEYIFPQSMNYCGTVYCCTMKGITLPKVYETLKNEINEVTLPKDIIERARRPIERMLELS</sequence>
<comment type="function">
    <text evidence="1">Catalyzes the condensation of iminoaspartate with dihydroxyacetone phosphate to form quinolinate.</text>
</comment>
<comment type="catalytic activity">
    <reaction evidence="1">
        <text>iminosuccinate + dihydroxyacetone phosphate = quinolinate + phosphate + 2 H2O + H(+)</text>
        <dbReference type="Rhea" id="RHEA:25888"/>
        <dbReference type="ChEBI" id="CHEBI:15377"/>
        <dbReference type="ChEBI" id="CHEBI:15378"/>
        <dbReference type="ChEBI" id="CHEBI:29959"/>
        <dbReference type="ChEBI" id="CHEBI:43474"/>
        <dbReference type="ChEBI" id="CHEBI:57642"/>
        <dbReference type="ChEBI" id="CHEBI:77875"/>
        <dbReference type="EC" id="2.5.1.72"/>
    </reaction>
    <physiologicalReaction direction="left-to-right" evidence="1">
        <dbReference type="Rhea" id="RHEA:25889"/>
    </physiologicalReaction>
</comment>
<comment type="cofactor">
    <cofactor evidence="1">
        <name>[4Fe-4S] cluster</name>
        <dbReference type="ChEBI" id="CHEBI:49883"/>
    </cofactor>
    <text evidence="1">Binds 1 [4Fe-4S] cluster per subunit.</text>
</comment>
<comment type="pathway">
    <text evidence="1">Cofactor biosynthesis; NAD(+) biosynthesis; quinolinate from iminoaspartate: step 1/1.</text>
</comment>
<comment type="subcellular location">
    <subcellularLocation>
        <location evidence="1">Cytoplasm</location>
    </subcellularLocation>
</comment>
<comment type="similarity">
    <text evidence="1">Belongs to the quinolinate synthase family. Type 2 subfamily.</text>
</comment>
<accession>O67730</accession>
<reference key="1">
    <citation type="journal article" date="1998" name="Nature">
        <title>The complete genome of the hyperthermophilic bacterium Aquifex aeolicus.</title>
        <authorList>
            <person name="Deckert G."/>
            <person name="Warren P.V."/>
            <person name="Gaasterland T."/>
            <person name="Young W.G."/>
            <person name="Lenox A.L."/>
            <person name="Graham D.E."/>
            <person name="Overbeek R."/>
            <person name="Snead M.A."/>
            <person name="Keller M."/>
            <person name="Aujay M."/>
            <person name="Huber R."/>
            <person name="Feldman R.A."/>
            <person name="Short J.M."/>
            <person name="Olsen G.J."/>
            <person name="Swanson R.V."/>
        </authorList>
    </citation>
    <scope>NUCLEOTIDE SEQUENCE [LARGE SCALE GENOMIC DNA]</scope>
    <source>
        <strain>VF5</strain>
    </source>
</reference>
<dbReference type="EC" id="2.5.1.72" evidence="1"/>
<dbReference type="EMBL" id="AE000657">
    <property type="protein sequence ID" value="AAC07687.1"/>
    <property type="molecule type" value="Genomic_DNA"/>
</dbReference>
<dbReference type="PIR" id="H70462">
    <property type="entry name" value="H70462"/>
</dbReference>
<dbReference type="RefSeq" id="NP_214298.1">
    <property type="nucleotide sequence ID" value="NC_000918.1"/>
</dbReference>
<dbReference type="RefSeq" id="WP_010881234.1">
    <property type="nucleotide sequence ID" value="NC_000918.1"/>
</dbReference>
<dbReference type="SMR" id="O67730"/>
<dbReference type="FunCoup" id="O67730">
    <property type="interactions" value="405"/>
</dbReference>
<dbReference type="STRING" id="224324.aq_1889"/>
<dbReference type="EnsemblBacteria" id="AAC07687">
    <property type="protein sequence ID" value="AAC07687"/>
    <property type="gene ID" value="aq_1889"/>
</dbReference>
<dbReference type="KEGG" id="aae:aq_1889"/>
<dbReference type="PATRIC" id="fig|224324.8.peg.1464"/>
<dbReference type="eggNOG" id="COG0379">
    <property type="taxonomic scope" value="Bacteria"/>
</dbReference>
<dbReference type="HOGENOM" id="CLU_047382_0_0_0"/>
<dbReference type="InParanoid" id="O67730"/>
<dbReference type="OrthoDB" id="9801204at2"/>
<dbReference type="UniPathway" id="UPA00253">
    <property type="reaction ID" value="UER00327"/>
</dbReference>
<dbReference type="Proteomes" id="UP000000798">
    <property type="component" value="Chromosome"/>
</dbReference>
<dbReference type="GO" id="GO:0005829">
    <property type="term" value="C:cytosol"/>
    <property type="evidence" value="ECO:0000318"/>
    <property type="project" value="GO_Central"/>
</dbReference>
<dbReference type="GO" id="GO:0051539">
    <property type="term" value="F:4 iron, 4 sulfur cluster binding"/>
    <property type="evidence" value="ECO:0000318"/>
    <property type="project" value="GO_Central"/>
</dbReference>
<dbReference type="GO" id="GO:0046872">
    <property type="term" value="F:metal ion binding"/>
    <property type="evidence" value="ECO:0007669"/>
    <property type="project" value="UniProtKB-KW"/>
</dbReference>
<dbReference type="GO" id="GO:0008987">
    <property type="term" value="F:quinolinate synthetase A activity"/>
    <property type="evidence" value="ECO:0000318"/>
    <property type="project" value="GO_Central"/>
</dbReference>
<dbReference type="GO" id="GO:0034628">
    <property type="term" value="P:'de novo' NAD biosynthetic process from L-aspartate"/>
    <property type="evidence" value="ECO:0000318"/>
    <property type="project" value="GO_Central"/>
</dbReference>
<dbReference type="FunFam" id="3.40.50.10800:FF:000001">
    <property type="entry name" value="Quinolinate synthase A"/>
    <property type="match status" value="1"/>
</dbReference>
<dbReference type="FunFam" id="3.40.50.10800:FF:000002">
    <property type="entry name" value="Quinolinate synthase A"/>
    <property type="match status" value="1"/>
</dbReference>
<dbReference type="Gene3D" id="3.40.50.10800">
    <property type="entry name" value="NadA-like"/>
    <property type="match status" value="3"/>
</dbReference>
<dbReference type="HAMAP" id="MF_00568">
    <property type="entry name" value="NadA_type2"/>
    <property type="match status" value="1"/>
</dbReference>
<dbReference type="InterPro" id="IPR003473">
    <property type="entry name" value="NadA"/>
</dbReference>
<dbReference type="InterPro" id="IPR036094">
    <property type="entry name" value="NadA_sf"/>
</dbReference>
<dbReference type="InterPro" id="IPR023066">
    <property type="entry name" value="Quinolinate_synth_type2"/>
</dbReference>
<dbReference type="NCBIfam" id="TIGR00550">
    <property type="entry name" value="nadA"/>
    <property type="match status" value="1"/>
</dbReference>
<dbReference type="NCBIfam" id="NF006878">
    <property type="entry name" value="PRK09375.1-2"/>
    <property type="match status" value="1"/>
</dbReference>
<dbReference type="NCBIfam" id="NF006879">
    <property type="entry name" value="PRK09375.1-4"/>
    <property type="match status" value="1"/>
</dbReference>
<dbReference type="PANTHER" id="PTHR30573:SF0">
    <property type="entry name" value="QUINOLINATE SYNTHASE, CHLOROPLASTIC"/>
    <property type="match status" value="1"/>
</dbReference>
<dbReference type="PANTHER" id="PTHR30573">
    <property type="entry name" value="QUINOLINATE SYNTHETASE A"/>
    <property type="match status" value="1"/>
</dbReference>
<dbReference type="Pfam" id="PF02445">
    <property type="entry name" value="NadA"/>
    <property type="match status" value="1"/>
</dbReference>
<dbReference type="SUPFAM" id="SSF142754">
    <property type="entry name" value="NadA-like"/>
    <property type="match status" value="1"/>
</dbReference>
<organism>
    <name type="scientific">Aquifex aeolicus (strain VF5)</name>
    <dbReference type="NCBI Taxonomy" id="224324"/>
    <lineage>
        <taxon>Bacteria</taxon>
        <taxon>Pseudomonadati</taxon>
        <taxon>Aquificota</taxon>
        <taxon>Aquificia</taxon>
        <taxon>Aquificales</taxon>
        <taxon>Aquificaceae</taxon>
        <taxon>Aquifex</taxon>
    </lineage>
</organism>
<evidence type="ECO:0000255" key="1">
    <source>
        <dbReference type="HAMAP-Rule" id="MF_00568"/>
    </source>
</evidence>
<gene>
    <name evidence="1" type="primary">nadA</name>
    <name type="ordered locus">aq_1889</name>
</gene>
<keyword id="KW-0004">4Fe-4S</keyword>
<keyword id="KW-0963">Cytoplasm</keyword>
<keyword id="KW-0408">Iron</keyword>
<keyword id="KW-0411">Iron-sulfur</keyword>
<keyword id="KW-0479">Metal-binding</keyword>
<keyword id="KW-0662">Pyridine nucleotide biosynthesis</keyword>
<keyword id="KW-1185">Reference proteome</keyword>
<keyword id="KW-0808">Transferase</keyword>
<name>NADA_AQUAE</name>
<protein>
    <recommendedName>
        <fullName evidence="1">Quinolinate synthase</fullName>
        <ecNumber evidence="1">2.5.1.72</ecNumber>
    </recommendedName>
</protein>
<feature type="chain" id="PRO_0000155781" description="Quinolinate synthase">
    <location>
        <begin position="1"/>
        <end position="322"/>
    </location>
</feature>
<feature type="binding site" evidence="1">
    <location>
        <position position="38"/>
    </location>
    <ligand>
        <name>iminosuccinate</name>
        <dbReference type="ChEBI" id="CHEBI:77875"/>
    </ligand>
</feature>
<feature type="binding site" evidence="1">
    <location>
        <position position="55"/>
    </location>
    <ligand>
        <name>iminosuccinate</name>
        <dbReference type="ChEBI" id="CHEBI:77875"/>
    </ligand>
</feature>
<feature type="binding site" evidence="1">
    <location>
        <position position="100"/>
    </location>
    <ligand>
        <name>[4Fe-4S] cluster</name>
        <dbReference type="ChEBI" id="CHEBI:49883"/>
    </ligand>
</feature>
<feature type="binding site" evidence="1">
    <location>
        <begin position="126"/>
        <end position="128"/>
    </location>
    <ligand>
        <name>iminosuccinate</name>
        <dbReference type="ChEBI" id="CHEBI:77875"/>
    </ligand>
</feature>
<feature type="binding site" evidence="1">
    <location>
        <position position="143"/>
    </location>
    <ligand>
        <name>iminosuccinate</name>
        <dbReference type="ChEBI" id="CHEBI:77875"/>
    </ligand>
</feature>
<feature type="binding site" evidence="1">
    <location>
        <position position="186"/>
    </location>
    <ligand>
        <name>[4Fe-4S] cluster</name>
        <dbReference type="ChEBI" id="CHEBI:49883"/>
    </ligand>
</feature>
<feature type="binding site" evidence="1">
    <location>
        <begin position="212"/>
        <end position="214"/>
    </location>
    <ligand>
        <name>iminosuccinate</name>
        <dbReference type="ChEBI" id="CHEBI:77875"/>
    </ligand>
</feature>
<feature type="binding site" evidence="1">
    <location>
        <position position="229"/>
    </location>
    <ligand>
        <name>iminosuccinate</name>
        <dbReference type="ChEBI" id="CHEBI:77875"/>
    </ligand>
</feature>
<feature type="binding site" evidence="1">
    <location>
        <position position="279"/>
    </location>
    <ligand>
        <name>[4Fe-4S] cluster</name>
        <dbReference type="ChEBI" id="CHEBI:49883"/>
    </ligand>
</feature>